<protein>
    <recommendedName>
        <fullName evidence="3">Cytochrome P450 monooxygenase tazI</fullName>
        <ecNumber evidence="5">1.-.-.-</ecNumber>
    </recommendedName>
    <alternativeName>
        <fullName evidence="3">Azaphilone biosynthesis cluster protein I</fullName>
    </alternativeName>
</protein>
<evidence type="ECO:0000250" key="1">
    <source>
        <dbReference type="UniProtKB" id="P04798"/>
    </source>
</evidence>
<evidence type="ECO:0000269" key="2">
    <source>
    </source>
</evidence>
<evidence type="ECO:0000303" key="3">
    <source>
    </source>
</evidence>
<evidence type="ECO:0000305" key="4"/>
<evidence type="ECO:0000305" key="5">
    <source>
    </source>
</evidence>
<gene>
    <name evidence="3" type="primary">tazI</name>
    <name type="ORF">ATEG_03444</name>
</gene>
<sequence length="489" mass="55336">MAYIQASSTQAVVVLLLVLVLTKIYRVYTGPLAHLPGPAISKWTGLVLQKHLFAGNRPRYVQKLHQLYGPIVRISPDELDVSDSAAAKSIHRVASRFYKGRFYEHIGHRSPKTLFSSTDPQFHAYRRRLLGGAMSETSIRQHEPTVAQKVKLCVDQMAREAERRGCIDVFKWWCFLATDTIGELSFGESFRMLEKGEKSQYSRDLELVSTLMIIRTTFPFLSRVAEYVPLPYFKQAAQSGKRMFGYASESIQRYKKHVEMKGXXXXXXXXXXXXXXXXXEGSLTEAEIRLEAGGYIVAGSDTSAISLTYLVWAVCKNPLIRDSLVAEVATLPEDFTDDDVRALPYTRRVIDETLRLYPAVPGALPRAVPPEGATLVDHFIPGGVTVSTQVYSLHRDPKIFPDPDRRFDPDRWIDPTTEMRDSFMPFGGGSRTCIGMHLARMELRLATAHFFRRFTSPTVSTKEGFTDDDMYQHMYFLVSPKGHRCLIDV</sequence>
<comment type="function">
    <text evidence="2 5">Cytochrome P450 monooxygenase; part of the gene cluster that mediates the biosynthesis of azaterrilone A and other azaphilones, a class of fungal metabolites characterized by a highly oxygenated pyrano-quinone bicyclic core and exhibiting a broad range of bioactivities (PubMed:35398258). The first step of the pathway begins with the non-reducing polyketide synthase tazA that assembles one acetyl-CoA starter unit, five malonyl-CoA units, and catalyzes a series of Claisen condensations, methylation, PT-mediated cyclization, and finally releases the first hexaketide precursor through the R-domain. The tazA product then undergoes reduction on its terminal ketone and the following pyran-ring formation by yet undetermined enzyme(s). Dehydration and enoyl reduction, possibly involving the trans-enoyl reductase tazE leads to the next intermediate. TazD is predicted as an acetyltransferase and might catalyze the acetylation steps leading to the synthesis of azaterrilone A. Azaterrilone A is not the final product of the taz pathway and both the highly reducing polyketide synthase tazB and the dual enzyme tazHJ catalyze late steps of the pathway, leading to the production of the 2 final stereoisomers that contain additional polyketide modification whose structures have still to be determined (Probable).</text>
</comment>
<comment type="cofactor">
    <cofactor evidence="1">
        <name>heme</name>
        <dbReference type="ChEBI" id="CHEBI:30413"/>
    </cofactor>
</comment>
<comment type="pathway">
    <text evidence="5">Secondary metabolite biosynthesis.</text>
</comment>
<comment type="induction">
    <text evidence="2">Expression is positively regulated by the azaterrilone A cluster-specific transcription factor tazR.</text>
</comment>
<comment type="similarity">
    <text evidence="4">Belongs to the cytochrome P450 family.</text>
</comment>
<comment type="sequence caution" evidence="4">
    <conflict type="erroneous gene model prediction">
        <sequence resource="EMBL-CDS" id="EAU36718"/>
    </conflict>
</comment>
<dbReference type="EC" id="1.-.-.-" evidence="5"/>
<dbReference type="EMBL" id="CH476597">
    <property type="protein sequence ID" value="EAU36718.1"/>
    <property type="status" value="ALT_SEQ"/>
    <property type="molecule type" value="Genomic_DNA"/>
</dbReference>
<dbReference type="RefSeq" id="XP_001212622.1">
    <property type="nucleotide sequence ID" value="XM_001212622.1"/>
</dbReference>
<dbReference type="STRING" id="341663.Q0CS90"/>
<dbReference type="EnsemblFungi" id="EAU36718">
    <property type="protein sequence ID" value="EAU36718"/>
    <property type="gene ID" value="ATEG_03444"/>
</dbReference>
<dbReference type="GeneID" id="4317677"/>
<dbReference type="VEuPathDB" id="FungiDB:ATEG_03444"/>
<dbReference type="eggNOG" id="KOG0158">
    <property type="taxonomic scope" value="Eukaryota"/>
</dbReference>
<dbReference type="HOGENOM" id="CLU_001570_14_9_1"/>
<dbReference type="OrthoDB" id="1470350at2759"/>
<dbReference type="Proteomes" id="UP000007963">
    <property type="component" value="Unassembled WGS sequence"/>
</dbReference>
<dbReference type="GO" id="GO:0020037">
    <property type="term" value="F:heme binding"/>
    <property type="evidence" value="ECO:0007669"/>
    <property type="project" value="InterPro"/>
</dbReference>
<dbReference type="GO" id="GO:0005506">
    <property type="term" value="F:iron ion binding"/>
    <property type="evidence" value="ECO:0007669"/>
    <property type="project" value="InterPro"/>
</dbReference>
<dbReference type="GO" id="GO:0004497">
    <property type="term" value="F:monooxygenase activity"/>
    <property type="evidence" value="ECO:0007669"/>
    <property type="project" value="UniProtKB-KW"/>
</dbReference>
<dbReference type="GO" id="GO:0016705">
    <property type="term" value="F:oxidoreductase activity, acting on paired donors, with incorporation or reduction of molecular oxygen"/>
    <property type="evidence" value="ECO:0007669"/>
    <property type="project" value="InterPro"/>
</dbReference>
<dbReference type="CDD" id="cd11059">
    <property type="entry name" value="CYP_fungal"/>
    <property type="match status" value="1"/>
</dbReference>
<dbReference type="Gene3D" id="1.10.630.10">
    <property type="entry name" value="Cytochrome P450"/>
    <property type="match status" value="1"/>
</dbReference>
<dbReference type="InterPro" id="IPR001128">
    <property type="entry name" value="Cyt_P450"/>
</dbReference>
<dbReference type="InterPro" id="IPR017972">
    <property type="entry name" value="Cyt_P450_CS"/>
</dbReference>
<dbReference type="InterPro" id="IPR002401">
    <property type="entry name" value="Cyt_P450_E_grp-I"/>
</dbReference>
<dbReference type="InterPro" id="IPR036396">
    <property type="entry name" value="Cyt_P450_sf"/>
</dbReference>
<dbReference type="InterPro" id="IPR050121">
    <property type="entry name" value="Cytochrome_P450_monoxygenase"/>
</dbReference>
<dbReference type="PANTHER" id="PTHR24305">
    <property type="entry name" value="CYTOCHROME P450"/>
    <property type="match status" value="1"/>
</dbReference>
<dbReference type="PANTHER" id="PTHR24305:SF96">
    <property type="entry name" value="CYTOCHROME P450 MONOOXYGENASE STCB-RELATED"/>
    <property type="match status" value="1"/>
</dbReference>
<dbReference type="Pfam" id="PF00067">
    <property type="entry name" value="p450"/>
    <property type="match status" value="1"/>
</dbReference>
<dbReference type="PRINTS" id="PR00463">
    <property type="entry name" value="EP450I"/>
</dbReference>
<dbReference type="PRINTS" id="PR00385">
    <property type="entry name" value="P450"/>
</dbReference>
<dbReference type="SUPFAM" id="SSF48264">
    <property type="entry name" value="Cytochrome P450"/>
    <property type="match status" value="1"/>
</dbReference>
<dbReference type="PROSITE" id="PS00086">
    <property type="entry name" value="CYTOCHROME_P450"/>
    <property type="match status" value="1"/>
</dbReference>
<accession>Q0CS90</accession>
<reference key="1">
    <citation type="submission" date="2005-09" db="EMBL/GenBank/DDBJ databases">
        <title>Annotation of the Aspergillus terreus NIH2624 genome.</title>
        <authorList>
            <person name="Birren B.W."/>
            <person name="Lander E.S."/>
            <person name="Galagan J.E."/>
            <person name="Nusbaum C."/>
            <person name="Devon K."/>
            <person name="Henn M."/>
            <person name="Ma L.-J."/>
            <person name="Jaffe D.B."/>
            <person name="Butler J."/>
            <person name="Alvarez P."/>
            <person name="Gnerre S."/>
            <person name="Grabherr M."/>
            <person name="Kleber M."/>
            <person name="Mauceli E.W."/>
            <person name="Brockman W."/>
            <person name="Rounsley S."/>
            <person name="Young S.K."/>
            <person name="LaButti K."/>
            <person name="Pushparaj V."/>
            <person name="DeCaprio D."/>
            <person name="Crawford M."/>
            <person name="Koehrsen M."/>
            <person name="Engels R."/>
            <person name="Montgomery P."/>
            <person name="Pearson M."/>
            <person name="Howarth C."/>
            <person name="Larson L."/>
            <person name="Luoma S."/>
            <person name="White J."/>
            <person name="Alvarado L."/>
            <person name="Kodira C.D."/>
            <person name="Zeng Q."/>
            <person name="Oleary S."/>
            <person name="Yandava C."/>
            <person name="Denning D.W."/>
            <person name="Nierman W.C."/>
            <person name="Milne T."/>
            <person name="Madden K."/>
        </authorList>
    </citation>
    <scope>NUCLEOTIDE SEQUENCE [LARGE SCALE GENOMIC DNA]</scope>
    <source>
        <strain>NIH 2624 / FGSC A1156</strain>
    </source>
</reference>
<reference key="2">
    <citation type="journal article" date="2022" name="Fungal Genet. Biol.">
        <title>Characterization of a silent azaphilone biosynthesis gene cluster in Aspergillus terreus NIH 2624.</title>
        <authorList>
            <person name="Sun W.W."/>
            <person name="Li C.Y."/>
            <person name="Chiang Y.M."/>
            <person name="Lin T.S."/>
            <person name="Warren S."/>
            <person name="Chang F.R."/>
            <person name="Wang C.C.C."/>
        </authorList>
    </citation>
    <scope>FUNCTION</scope>
    <scope>INDUCTION</scope>
    <scope>PATHWAY</scope>
</reference>
<feature type="chain" id="PRO_0000456075" description="Cytochrome P450 monooxygenase tazI">
    <location>
        <begin position="1"/>
        <end position="489"/>
    </location>
</feature>
<feature type="binding site" description="axial binding residue" evidence="1">
    <location>
        <position position="433"/>
    </location>
    <ligand>
        <name>heme</name>
        <dbReference type="ChEBI" id="CHEBI:30413"/>
    </ligand>
    <ligandPart>
        <name>Fe</name>
        <dbReference type="ChEBI" id="CHEBI:18248"/>
    </ligandPart>
</feature>
<keyword id="KW-0349">Heme</keyword>
<keyword id="KW-0408">Iron</keyword>
<keyword id="KW-0479">Metal-binding</keyword>
<keyword id="KW-0503">Monooxygenase</keyword>
<keyword id="KW-0560">Oxidoreductase</keyword>
<keyword id="KW-1185">Reference proteome</keyword>
<proteinExistence type="evidence at transcript level"/>
<organism>
    <name type="scientific">Aspergillus terreus (strain NIH 2624 / FGSC A1156)</name>
    <dbReference type="NCBI Taxonomy" id="341663"/>
    <lineage>
        <taxon>Eukaryota</taxon>
        <taxon>Fungi</taxon>
        <taxon>Dikarya</taxon>
        <taxon>Ascomycota</taxon>
        <taxon>Pezizomycotina</taxon>
        <taxon>Eurotiomycetes</taxon>
        <taxon>Eurotiomycetidae</taxon>
        <taxon>Eurotiales</taxon>
        <taxon>Aspergillaceae</taxon>
        <taxon>Aspergillus</taxon>
        <taxon>Aspergillus subgen. Circumdati</taxon>
    </lineage>
</organism>
<name>TAZI_ASPTN</name>